<reference key="1">
    <citation type="journal article" date="2009" name="J. Bacteriol.">
        <title>Complete genome sequence of the extremophilic Bacillus cereus strain Q1 with industrial applications.</title>
        <authorList>
            <person name="Xiong Z."/>
            <person name="Jiang Y."/>
            <person name="Qi D."/>
            <person name="Lu H."/>
            <person name="Yang F."/>
            <person name="Yang J."/>
            <person name="Chen L."/>
            <person name="Sun L."/>
            <person name="Xu X."/>
            <person name="Xue Y."/>
            <person name="Zhu Y."/>
            <person name="Jin Q."/>
        </authorList>
    </citation>
    <scope>NUCLEOTIDE SEQUENCE [LARGE SCALE GENOMIC DNA]</scope>
    <source>
        <strain>Q1</strain>
    </source>
</reference>
<gene>
    <name evidence="1" type="primary">rpsT</name>
    <name type="ordered locus">BCQ_4108</name>
</gene>
<evidence type="ECO:0000255" key="1">
    <source>
        <dbReference type="HAMAP-Rule" id="MF_00500"/>
    </source>
</evidence>
<evidence type="ECO:0000256" key="2">
    <source>
        <dbReference type="SAM" id="MobiDB-lite"/>
    </source>
</evidence>
<evidence type="ECO:0000305" key="3"/>
<dbReference type="EMBL" id="CP000227">
    <property type="protein sequence ID" value="ACM14535.1"/>
    <property type="molecule type" value="Genomic_DNA"/>
</dbReference>
<dbReference type="SMR" id="B9IY89"/>
<dbReference type="KEGG" id="bcq:BCQ_4108"/>
<dbReference type="HOGENOM" id="CLU_160655_1_0_9"/>
<dbReference type="Proteomes" id="UP000000441">
    <property type="component" value="Chromosome"/>
</dbReference>
<dbReference type="GO" id="GO:0005829">
    <property type="term" value="C:cytosol"/>
    <property type="evidence" value="ECO:0007669"/>
    <property type="project" value="TreeGrafter"/>
</dbReference>
<dbReference type="GO" id="GO:0015935">
    <property type="term" value="C:small ribosomal subunit"/>
    <property type="evidence" value="ECO:0007669"/>
    <property type="project" value="TreeGrafter"/>
</dbReference>
<dbReference type="GO" id="GO:0070181">
    <property type="term" value="F:small ribosomal subunit rRNA binding"/>
    <property type="evidence" value="ECO:0007669"/>
    <property type="project" value="TreeGrafter"/>
</dbReference>
<dbReference type="GO" id="GO:0003735">
    <property type="term" value="F:structural constituent of ribosome"/>
    <property type="evidence" value="ECO:0007669"/>
    <property type="project" value="InterPro"/>
</dbReference>
<dbReference type="GO" id="GO:0006412">
    <property type="term" value="P:translation"/>
    <property type="evidence" value="ECO:0007669"/>
    <property type="project" value="UniProtKB-UniRule"/>
</dbReference>
<dbReference type="FunFam" id="1.20.58.110:FF:000001">
    <property type="entry name" value="30S ribosomal protein S20"/>
    <property type="match status" value="1"/>
</dbReference>
<dbReference type="Gene3D" id="1.20.58.110">
    <property type="entry name" value="Ribosomal protein S20"/>
    <property type="match status" value="1"/>
</dbReference>
<dbReference type="HAMAP" id="MF_00500">
    <property type="entry name" value="Ribosomal_bS20"/>
    <property type="match status" value="1"/>
</dbReference>
<dbReference type="InterPro" id="IPR002583">
    <property type="entry name" value="Ribosomal_bS20"/>
</dbReference>
<dbReference type="InterPro" id="IPR036510">
    <property type="entry name" value="Ribosomal_bS20_sf"/>
</dbReference>
<dbReference type="NCBIfam" id="TIGR00029">
    <property type="entry name" value="S20"/>
    <property type="match status" value="1"/>
</dbReference>
<dbReference type="PANTHER" id="PTHR33398">
    <property type="entry name" value="30S RIBOSOMAL PROTEIN S20"/>
    <property type="match status" value="1"/>
</dbReference>
<dbReference type="PANTHER" id="PTHR33398:SF1">
    <property type="entry name" value="SMALL RIBOSOMAL SUBUNIT PROTEIN BS20C"/>
    <property type="match status" value="1"/>
</dbReference>
<dbReference type="Pfam" id="PF01649">
    <property type="entry name" value="Ribosomal_S20p"/>
    <property type="match status" value="1"/>
</dbReference>
<dbReference type="SUPFAM" id="SSF46992">
    <property type="entry name" value="Ribosomal protein S20"/>
    <property type="match status" value="1"/>
</dbReference>
<protein>
    <recommendedName>
        <fullName evidence="1">Small ribosomal subunit protein bS20</fullName>
    </recommendedName>
    <alternativeName>
        <fullName evidence="3">30S ribosomal protein S20</fullName>
    </alternativeName>
</protein>
<organism>
    <name type="scientific">Bacillus cereus (strain Q1)</name>
    <dbReference type="NCBI Taxonomy" id="361100"/>
    <lineage>
        <taxon>Bacteria</taxon>
        <taxon>Bacillati</taxon>
        <taxon>Bacillota</taxon>
        <taxon>Bacilli</taxon>
        <taxon>Bacillales</taxon>
        <taxon>Bacillaceae</taxon>
        <taxon>Bacillus</taxon>
        <taxon>Bacillus cereus group</taxon>
    </lineage>
</organism>
<accession>B9IY89</accession>
<keyword id="KW-0687">Ribonucleoprotein</keyword>
<keyword id="KW-0689">Ribosomal protein</keyword>
<keyword id="KW-0694">RNA-binding</keyword>
<keyword id="KW-0699">rRNA-binding</keyword>
<name>RS20_BACCQ</name>
<comment type="function">
    <text evidence="1">Binds directly to 16S ribosomal RNA.</text>
</comment>
<comment type="similarity">
    <text evidence="1">Belongs to the bacterial ribosomal protein bS20 family.</text>
</comment>
<proteinExistence type="inferred from homology"/>
<feature type="chain" id="PRO_1000135773" description="Small ribosomal subunit protein bS20">
    <location>
        <begin position="1"/>
        <end position="85"/>
    </location>
</feature>
<feature type="region of interest" description="Disordered" evidence="2">
    <location>
        <begin position="1"/>
        <end position="25"/>
    </location>
</feature>
<sequence>MANIKSAIKRAKLSEERRAHNASIKSDMRSAVKTVEALVTNNDLENAKEAFKTASKKLDKAARKGLIHQNAAARQKSRLAKQVNA</sequence>